<dbReference type="EMBL" id="DS027688">
    <property type="protein sequence ID" value="EAW23551.1"/>
    <property type="molecule type" value="Genomic_DNA"/>
</dbReference>
<dbReference type="RefSeq" id="XP_001265448.1">
    <property type="nucleotide sequence ID" value="XM_001265447.1"/>
</dbReference>
<dbReference type="SMR" id="A1D558"/>
<dbReference type="STRING" id="331117.A1D558"/>
<dbReference type="EnsemblFungi" id="EAW23551">
    <property type="protein sequence ID" value="EAW23551"/>
    <property type="gene ID" value="NFIA_022620"/>
</dbReference>
<dbReference type="GeneID" id="4590650"/>
<dbReference type="KEGG" id="nfi:NFIA_022620"/>
<dbReference type="VEuPathDB" id="FungiDB:NFIA_022620"/>
<dbReference type="eggNOG" id="KOG2314">
    <property type="taxonomic scope" value="Eukaryota"/>
</dbReference>
<dbReference type="HOGENOM" id="CLU_011152_4_0_1"/>
<dbReference type="OMA" id="LWGGPQF"/>
<dbReference type="OrthoDB" id="10250414at2759"/>
<dbReference type="Proteomes" id="UP000006702">
    <property type="component" value="Unassembled WGS sequence"/>
</dbReference>
<dbReference type="GO" id="GO:0010494">
    <property type="term" value="C:cytoplasmic stress granule"/>
    <property type="evidence" value="ECO:0007669"/>
    <property type="project" value="EnsemblFungi"/>
</dbReference>
<dbReference type="GO" id="GO:0016282">
    <property type="term" value="C:eukaryotic 43S preinitiation complex"/>
    <property type="evidence" value="ECO:0007669"/>
    <property type="project" value="UniProtKB-UniRule"/>
</dbReference>
<dbReference type="GO" id="GO:0033290">
    <property type="term" value="C:eukaryotic 48S preinitiation complex"/>
    <property type="evidence" value="ECO:0007669"/>
    <property type="project" value="UniProtKB-UniRule"/>
</dbReference>
<dbReference type="GO" id="GO:0071540">
    <property type="term" value="C:eukaryotic translation initiation factor 3 complex, eIF3e"/>
    <property type="evidence" value="ECO:0007669"/>
    <property type="project" value="EnsemblFungi"/>
</dbReference>
<dbReference type="GO" id="GO:0071541">
    <property type="term" value="C:eukaryotic translation initiation factor 3 complex, eIF3m"/>
    <property type="evidence" value="ECO:0007669"/>
    <property type="project" value="EnsemblFungi"/>
</dbReference>
<dbReference type="GO" id="GO:0043614">
    <property type="term" value="C:multi-eIF complex"/>
    <property type="evidence" value="ECO:0007669"/>
    <property type="project" value="EnsemblFungi"/>
</dbReference>
<dbReference type="GO" id="GO:0042802">
    <property type="term" value="F:identical protein binding"/>
    <property type="evidence" value="ECO:0007669"/>
    <property type="project" value="EnsemblFungi"/>
</dbReference>
<dbReference type="GO" id="GO:0003723">
    <property type="term" value="F:RNA binding"/>
    <property type="evidence" value="ECO:0007669"/>
    <property type="project" value="UniProtKB-UniRule"/>
</dbReference>
<dbReference type="GO" id="GO:0003743">
    <property type="term" value="F:translation initiation factor activity"/>
    <property type="evidence" value="ECO:0007669"/>
    <property type="project" value="UniProtKB-UniRule"/>
</dbReference>
<dbReference type="GO" id="GO:0031369">
    <property type="term" value="F:translation initiation factor binding"/>
    <property type="evidence" value="ECO:0007669"/>
    <property type="project" value="InterPro"/>
</dbReference>
<dbReference type="GO" id="GO:0001732">
    <property type="term" value="P:formation of cytoplasmic translation initiation complex"/>
    <property type="evidence" value="ECO:0007669"/>
    <property type="project" value="UniProtKB-UniRule"/>
</dbReference>
<dbReference type="CDD" id="cd12278">
    <property type="entry name" value="RRM_eIF3B"/>
    <property type="match status" value="1"/>
</dbReference>
<dbReference type="FunFam" id="2.130.10.10:FF:000419">
    <property type="entry name" value="Eukaryotic translation initiation factor 3 subunit B"/>
    <property type="match status" value="1"/>
</dbReference>
<dbReference type="FunFam" id="3.30.70.330:FF:000235">
    <property type="entry name" value="Eukaryotic translation initiation factor 3 subunit B"/>
    <property type="match status" value="1"/>
</dbReference>
<dbReference type="Gene3D" id="3.30.70.330">
    <property type="match status" value="1"/>
</dbReference>
<dbReference type="Gene3D" id="2.130.10.10">
    <property type="entry name" value="YVTN repeat-like/Quinoprotein amine dehydrogenase"/>
    <property type="match status" value="1"/>
</dbReference>
<dbReference type="HAMAP" id="MF_03001">
    <property type="entry name" value="eIF3b"/>
    <property type="match status" value="1"/>
</dbReference>
<dbReference type="InterPro" id="IPR011400">
    <property type="entry name" value="EIF3B"/>
</dbReference>
<dbReference type="InterPro" id="IPR034363">
    <property type="entry name" value="eIF3B_RRM"/>
</dbReference>
<dbReference type="InterPro" id="IPR012677">
    <property type="entry name" value="Nucleotide-bd_a/b_plait_sf"/>
</dbReference>
<dbReference type="InterPro" id="IPR035979">
    <property type="entry name" value="RBD_domain_sf"/>
</dbReference>
<dbReference type="InterPro" id="IPR000504">
    <property type="entry name" value="RRM_dom"/>
</dbReference>
<dbReference type="InterPro" id="IPR013979">
    <property type="entry name" value="TIF_beta_prop-like"/>
</dbReference>
<dbReference type="InterPro" id="IPR015943">
    <property type="entry name" value="WD40/YVTN_repeat-like_dom_sf"/>
</dbReference>
<dbReference type="PANTHER" id="PTHR14068">
    <property type="entry name" value="EUKARYOTIC TRANSLATION INITIATION FACTOR 3 EIF3 -RELATED"/>
    <property type="match status" value="1"/>
</dbReference>
<dbReference type="PANTHER" id="PTHR14068:SF0">
    <property type="entry name" value="EUKARYOTIC TRANSLATION INITIATION FACTOR 3 SUBUNIT B"/>
    <property type="match status" value="1"/>
</dbReference>
<dbReference type="Pfam" id="PF08662">
    <property type="entry name" value="eIF2A"/>
    <property type="match status" value="1"/>
</dbReference>
<dbReference type="Pfam" id="PF00076">
    <property type="entry name" value="RRM_1"/>
    <property type="match status" value="1"/>
</dbReference>
<dbReference type="PIRSF" id="PIRSF036424">
    <property type="entry name" value="eIF3b"/>
    <property type="match status" value="1"/>
</dbReference>
<dbReference type="SMART" id="SM00360">
    <property type="entry name" value="RRM"/>
    <property type="match status" value="1"/>
</dbReference>
<dbReference type="SUPFAM" id="SSF54928">
    <property type="entry name" value="RNA-binding domain, RBD"/>
    <property type="match status" value="1"/>
</dbReference>
<dbReference type="SUPFAM" id="SSF69322">
    <property type="entry name" value="Tricorn protease domain 2"/>
    <property type="match status" value="1"/>
</dbReference>
<dbReference type="PROSITE" id="PS50102">
    <property type="entry name" value="RRM"/>
    <property type="match status" value="1"/>
</dbReference>
<protein>
    <recommendedName>
        <fullName evidence="1">Eukaryotic translation initiation factor 3 subunit B</fullName>
        <shortName evidence="1">eIF3b</shortName>
    </recommendedName>
    <alternativeName>
        <fullName evidence="1">Eukaryotic translation initiation factor 3 90 kDa subunit homolog</fullName>
        <shortName evidence="1">eIF3 p90</shortName>
    </alternativeName>
    <alternativeName>
        <fullName>Translation initiation factor eIF3 p90 subunit homolog</fullName>
    </alternativeName>
</protein>
<proteinExistence type="inferred from homology"/>
<accession>A1D558</accession>
<feature type="chain" id="PRO_0000363822" description="Eukaryotic translation initiation factor 3 subunit B">
    <location>
        <begin position="1"/>
        <end position="740"/>
    </location>
</feature>
<feature type="domain" description="RRM" evidence="1">
    <location>
        <begin position="40"/>
        <end position="126"/>
    </location>
</feature>
<feature type="repeat" description="WD 1">
    <location>
        <begin position="193"/>
        <end position="230"/>
    </location>
</feature>
<feature type="repeat" description="WD 2">
    <location>
        <begin position="232"/>
        <end position="289"/>
    </location>
</feature>
<feature type="repeat" description="WD 3">
    <location>
        <begin position="302"/>
        <end position="343"/>
    </location>
</feature>
<feature type="repeat" description="WD 4">
    <location>
        <begin position="455"/>
        <end position="496"/>
    </location>
</feature>
<feature type="repeat" description="WD 5">
    <location>
        <begin position="513"/>
        <end position="556"/>
    </location>
</feature>
<feature type="repeat" description="WD 6">
    <location>
        <begin position="571"/>
        <end position="609"/>
    </location>
</feature>
<feature type="region of interest" description="Disordered" evidence="2">
    <location>
        <begin position="1"/>
        <end position="20"/>
    </location>
</feature>
<feature type="region of interest" description="Disordered" evidence="2">
    <location>
        <begin position="695"/>
        <end position="721"/>
    </location>
</feature>
<feature type="compositionally biased region" description="Polar residues" evidence="2">
    <location>
        <begin position="1"/>
        <end position="10"/>
    </location>
</feature>
<evidence type="ECO:0000255" key="1">
    <source>
        <dbReference type="HAMAP-Rule" id="MF_03001"/>
    </source>
</evidence>
<evidence type="ECO:0000256" key="2">
    <source>
        <dbReference type="SAM" id="MobiDB-lite"/>
    </source>
</evidence>
<comment type="function">
    <text evidence="1">RNA-binding component of the eukaryotic translation initiation factor 3 (eIF-3) complex, which is involved in protein synthesis of a specialized repertoire of mRNAs and, together with other initiation factors, stimulates binding of mRNA and methionyl-tRNAi to the 40S ribosome. The eIF-3 complex specifically targets and initiates translation of a subset of mRNAs involved in cell proliferation.</text>
</comment>
<comment type="subunit">
    <text evidence="1">Component of the eukaryotic translation initiation factor 3 (eIF-3) complex.</text>
</comment>
<comment type="subcellular location">
    <subcellularLocation>
        <location evidence="1">Cytoplasm</location>
    </subcellularLocation>
</comment>
<comment type="similarity">
    <text evidence="1">Belongs to the eIF-3 subunit B family.</text>
</comment>
<name>EIF3B_NEOFI</name>
<organism>
    <name type="scientific">Neosartorya fischeri (strain ATCC 1020 / DSM 3700 / CBS 544.65 / FGSC A1164 / JCM 1740 / NRRL 181 / WB 181)</name>
    <name type="common">Aspergillus fischerianus</name>
    <dbReference type="NCBI Taxonomy" id="331117"/>
    <lineage>
        <taxon>Eukaryota</taxon>
        <taxon>Fungi</taxon>
        <taxon>Dikarya</taxon>
        <taxon>Ascomycota</taxon>
        <taxon>Pezizomycotina</taxon>
        <taxon>Eurotiomycetes</taxon>
        <taxon>Eurotiomycetidae</taxon>
        <taxon>Eurotiales</taxon>
        <taxon>Aspergillaceae</taxon>
        <taxon>Aspergillus</taxon>
        <taxon>Aspergillus subgen. Fumigati</taxon>
    </lineage>
</organism>
<keyword id="KW-0963">Cytoplasm</keyword>
<keyword id="KW-0396">Initiation factor</keyword>
<keyword id="KW-0648">Protein biosynthesis</keyword>
<keyword id="KW-1185">Reference proteome</keyword>
<keyword id="KW-0677">Repeat</keyword>
<keyword id="KW-0694">RNA-binding</keyword>
<keyword id="KW-0853">WD repeat</keyword>
<reference key="1">
    <citation type="journal article" date="2008" name="PLoS Genet.">
        <title>Genomic islands in the pathogenic filamentous fungus Aspergillus fumigatus.</title>
        <authorList>
            <person name="Fedorova N.D."/>
            <person name="Khaldi N."/>
            <person name="Joardar V.S."/>
            <person name="Maiti R."/>
            <person name="Amedeo P."/>
            <person name="Anderson M.J."/>
            <person name="Crabtree J."/>
            <person name="Silva J.C."/>
            <person name="Badger J.H."/>
            <person name="Albarraq A."/>
            <person name="Angiuoli S."/>
            <person name="Bussey H."/>
            <person name="Bowyer P."/>
            <person name="Cotty P.J."/>
            <person name="Dyer P.S."/>
            <person name="Egan A."/>
            <person name="Galens K."/>
            <person name="Fraser-Liggett C.M."/>
            <person name="Haas B.J."/>
            <person name="Inman J.M."/>
            <person name="Kent R."/>
            <person name="Lemieux S."/>
            <person name="Malavazi I."/>
            <person name="Orvis J."/>
            <person name="Roemer T."/>
            <person name="Ronning C.M."/>
            <person name="Sundaram J.P."/>
            <person name="Sutton G."/>
            <person name="Turner G."/>
            <person name="Venter J.C."/>
            <person name="White O.R."/>
            <person name="Whitty B.R."/>
            <person name="Youngman P."/>
            <person name="Wolfe K.H."/>
            <person name="Goldman G.H."/>
            <person name="Wortman J.R."/>
            <person name="Jiang B."/>
            <person name="Denning D.W."/>
            <person name="Nierman W.C."/>
        </authorList>
    </citation>
    <scope>NUCLEOTIDE SEQUENCE [LARGE SCALE GENOMIC DNA]</scope>
    <source>
        <strain>ATCC 1020 / DSM 3700 / CBS 544.65 / FGSC A1164 / JCM 1740 / NRRL 181 / WB 181</strain>
    </source>
</reference>
<sequence length="740" mass="84400">MAPSFDTLSEQDLHEEEEEEIDFSDLKAQYEVKLEEGLDTFVVIDGLPVVPEESRQKLIKFLLRKLNTVGHTSEDAVFMPLNDKNMSEGYAFVEFETPEQAVAAVKQLHGTPLDKKHTLLVNKLMDIERYGREGRIDEEYKPPAIEPFKEKEHLRSWLADPNARDQFALHRGDKVGVFWNNKNNPPENVVDRAHWTQLFAQWSPKGTYLASVHPQGVQLWGGPAFSKQKQFPHPFVQLIEFSPGESYLTTWSARPIQVEEGQSILTYEEEGKNIIVWDIATGKPLRSFVSHDLTAGPAGDAEPKKKVQWPAFKWSADEKYVARMLQHQSISIYELPRMNLLGKTSVKIDGVMDFEWSPATVTREGVKQYEQLLCFWTPEIGSSPARVAMMSVPSKEIVRTRNLFNVSDVKLHWQSQGSYVCVKVDRHSKSKKSMATNLEIFRVREKGVPVEVVDSLKDTVINFAWEPNGNRFVLITTGEAVAGAAVAPKTAVSFFAPEKKGGAIGNFKLIRTIEKKNSNAIYWSPKGRFVVVATVHSQTSFDMDFWDMDFEGEKPEAEKDFAANLQLMKTIEHYGVTDIDWDPTGRYVVSSASVWTHQLENGWNMHTFAGQTLSENPTDKFKQFLWRPRPPTLLSKEEQKQVRKNLREYSKEFDEEDRYAVDIANTAVVEKRKRVLNEWVAWIRREKELLAEEKDAYGLPEEADDPKLAKDAAATTQEQGETVVEEIVEEIIEESEEVIG</sequence>
<gene>
    <name type="primary">prt1</name>
    <name type="ORF">NFIA_022620</name>
</gene>